<keyword id="KW-0687">Ribonucleoprotein</keyword>
<keyword id="KW-0689">Ribosomal protein</keyword>
<keyword id="KW-0694">RNA-binding</keyword>
<keyword id="KW-0699">rRNA-binding</keyword>
<organism>
    <name type="scientific">Vibrio parahaemolyticus serotype O3:K6 (strain RIMD 2210633)</name>
    <dbReference type="NCBI Taxonomy" id="223926"/>
    <lineage>
        <taxon>Bacteria</taxon>
        <taxon>Pseudomonadati</taxon>
        <taxon>Pseudomonadota</taxon>
        <taxon>Gammaproteobacteria</taxon>
        <taxon>Vibrionales</taxon>
        <taxon>Vibrionaceae</taxon>
        <taxon>Vibrio</taxon>
    </lineage>
</organism>
<dbReference type="EMBL" id="BA000031">
    <property type="protein sequence ID" value="BAC58794.1"/>
    <property type="molecule type" value="Genomic_DNA"/>
</dbReference>
<dbReference type="RefSeq" id="NP_796910.1">
    <property type="nucleotide sequence ID" value="NC_004603.1"/>
</dbReference>
<dbReference type="RefSeq" id="WP_005381938.1">
    <property type="nucleotide sequence ID" value="NC_004603.1"/>
</dbReference>
<dbReference type="SMR" id="Q87S93"/>
<dbReference type="GeneID" id="75168741"/>
<dbReference type="KEGG" id="vpa:VP0531"/>
<dbReference type="PATRIC" id="fig|223926.6.peg.504"/>
<dbReference type="eggNOG" id="COG0268">
    <property type="taxonomic scope" value="Bacteria"/>
</dbReference>
<dbReference type="HOGENOM" id="CLU_160655_4_0_6"/>
<dbReference type="Proteomes" id="UP000002493">
    <property type="component" value="Chromosome 1"/>
</dbReference>
<dbReference type="GO" id="GO:0005829">
    <property type="term" value="C:cytosol"/>
    <property type="evidence" value="ECO:0007669"/>
    <property type="project" value="TreeGrafter"/>
</dbReference>
<dbReference type="GO" id="GO:0015935">
    <property type="term" value="C:small ribosomal subunit"/>
    <property type="evidence" value="ECO:0007669"/>
    <property type="project" value="TreeGrafter"/>
</dbReference>
<dbReference type="GO" id="GO:0070181">
    <property type="term" value="F:small ribosomal subunit rRNA binding"/>
    <property type="evidence" value="ECO:0007669"/>
    <property type="project" value="TreeGrafter"/>
</dbReference>
<dbReference type="GO" id="GO:0003735">
    <property type="term" value="F:structural constituent of ribosome"/>
    <property type="evidence" value="ECO:0007669"/>
    <property type="project" value="InterPro"/>
</dbReference>
<dbReference type="GO" id="GO:0006412">
    <property type="term" value="P:translation"/>
    <property type="evidence" value="ECO:0007669"/>
    <property type="project" value="UniProtKB-UniRule"/>
</dbReference>
<dbReference type="FunFam" id="1.20.58.110:FF:000001">
    <property type="entry name" value="30S ribosomal protein S20"/>
    <property type="match status" value="1"/>
</dbReference>
<dbReference type="Gene3D" id="1.20.58.110">
    <property type="entry name" value="Ribosomal protein S20"/>
    <property type="match status" value="1"/>
</dbReference>
<dbReference type="HAMAP" id="MF_00500">
    <property type="entry name" value="Ribosomal_bS20"/>
    <property type="match status" value="1"/>
</dbReference>
<dbReference type="InterPro" id="IPR002583">
    <property type="entry name" value="Ribosomal_bS20"/>
</dbReference>
<dbReference type="InterPro" id="IPR036510">
    <property type="entry name" value="Ribosomal_bS20_sf"/>
</dbReference>
<dbReference type="NCBIfam" id="TIGR00029">
    <property type="entry name" value="S20"/>
    <property type="match status" value="1"/>
</dbReference>
<dbReference type="PANTHER" id="PTHR33398">
    <property type="entry name" value="30S RIBOSOMAL PROTEIN S20"/>
    <property type="match status" value="1"/>
</dbReference>
<dbReference type="PANTHER" id="PTHR33398:SF1">
    <property type="entry name" value="SMALL RIBOSOMAL SUBUNIT PROTEIN BS20C"/>
    <property type="match status" value="1"/>
</dbReference>
<dbReference type="Pfam" id="PF01649">
    <property type="entry name" value="Ribosomal_S20p"/>
    <property type="match status" value="1"/>
</dbReference>
<dbReference type="SUPFAM" id="SSF46992">
    <property type="entry name" value="Ribosomal protein S20"/>
    <property type="match status" value="1"/>
</dbReference>
<reference key="1">
    <citation type="journal article" date="2003" name="Lancet">
        <title>Genome sequence of Vibrio parahaemolyticus: a pathogenic mechanism distinct from that of V. cholerae.</title>
        <authorList>
            <person name="Makino K."/>
            <person name="Oshima K."/>
            <person name="Kurokawa K."/>
            <person name="Yokoyama K."/>
            <person name="Uda T."/>
            <person name="Tagomori K."/>
            <person name="Iijima Y."/>
            <person name="Najima M."/>
            <person name="Nakano M."/>
            <person name="Yamashita A."/>
            <person name="Kubota Y."/>
            <person name="Kimura S."/>
            <person name="Yasunaga T."/>
            <person name="Honda T."/>
            <person name="Shinagawa H."/>
            <person name="Hattori M."/>
            <person name="Iida T."/>
        </authorList>
    </citation>
    <scope>NUCLEOTIDE SEQUENCE [LARGE SCALE GENOMIC DNA]</scope>
    <source>
        <strain>RIMD 2210633</strain>
    </source>
</reference>
<accession>Q87S93</accession>
<name>RS20_VIBPA</name>
<comment type="function">
    <text evidence="1">Binds directly to 16S ribosomal RNA.</text>
</comment>
<comment type="similarity">
    <text evidence="1">Belongs to the bacterial ribosomal protein bS20 family.</text>
</comment>
<sequence>MANSKSAKKRAIQAEKRRQHNASRRSMMRTYMKKTVAAIEAGDKEAATAAFAVVTPILDRMATKGLIHKNKAARHKSRFAAQIKAL</sequence>
<evidence type="ECO:0000255" key="1">
    <source>
        <dbReference type="HAMAP-Rule" id="MF_00500"/>
    </source>
</evidence>
<evidence type="ECO:0000256" key="2">
    <source>
        <dbReference type="SAM" id="MobiDB-lite"/>
    </source>
</evidence>
<evidence type="ECO:0000305" key="3"/>
<protein>
    <recommendedName>
        <fullName evidence="1">Small ribosomal subunit protein bS20</fullName>
    </recommendedName>
    <alternativeName>
        <fullName evidence="3">30S ribosomal protein S20</fullName>
    </alternativeName>
</protein>
<feature type="chain" id="PRO_0000168057" description="Small ribosomal subunit protein bS20">
    <location>
        <begin position="1"/>
        <end position="86"/>
    </location>
</feature>
<feature type="region of interest" description="Disordered" evidence="2">
    <location>
        <begin position="1"/>
        <end position="28"/>
    </location>
</feature>
<feature type="compositionally biased region" description="Basic residues" evidence="2">
    <location>
        <begin position="1"/>
        <end position="27"/>
    </location>
</feature>
<gene>
    <name evidence="1" type="primary">rpsT</name>
    <name type="ordered locus">VP0531</name>
</gene>
<proteinExistence type="inferred from homology"/>